<dbReference type="EMBL" id="AF053939">
    <property type="protein sequence ID" value="AAG17474.1"/>
    <property type="molecule type" value="mRNA"/>
</dbReference>
<dbReference type="EMBL" id="AC007212">
    <property type="protein sequence ID" value="AAD31350.1"/>
    <property type="molecule type" value="Genomic_DNA"/>
</dbReference>
<dbReference type="EMBL" id="CP002685">
    <property type="protein sequence ID" value="AEC06732.1"/>
    <property type="molecule type" value="Genomic_DNA"/>
</dbReference>
<dbReference type="EMBL" id="AY037216">
    <property type="protein sequence ID" value="AAK59801.1"/>
    <property type="molecule type" value="mRNA"/>
</dbReference>
<dbReference type="EMBL" id="AY133545">
    <property type="protein sequence ID" value="AAM91375.1"/>
    <property type="molecule type" value="mRNA"/>
</dbReference>
<dbReference type="EMBL" id="BT000700">
    <property type="protein sequence ID" value="AAN31844.1"/>
    <property type="molecule type" value="mRNA"/>
</dbReference>
<dbReference type="PIR" id="A84561">
    <property type="entry name" value="A84561"/>
</dbReference>
<dbReference type="RefSeq" id="NP_179408.1">
    <property type="nucleotide sequence ID" value="NM_127373.2"/>
</dbReference>
<dbReference type="SMR" id="Q9SI15"/>
<dbReference type="FunCoup" id="Q9SI15">
    <property type="interactions" value="5"/>
</dbReference>
<dbReference type="IntAct" id="Q9SI15">
    <property type="interactions" value="12"/>
</dbReference>
<dbReference type="MINT" id="Q9SI15"/>
<dbReference type="STRING" id="3702.Q9SI15"/>
<dbReference type="PaxDb" id="3702-AT2G18160.1"/>
<dbReference type="ProteomicsDB" id="240416"/>
<dbReference type="EnsemblPlants" id="AT2G18160.1">
    <property type="protein sequence ID" value="AT2G18160.1"/>
    <property type="gene ID" value="AT2G18160"/>
</dbReference>
<dbReference type="GeneID" id="816329"/>
<dbReference type="Gramene" id="AT2G18160.1">
    <property type="protein sequence ID" value="AT2G18160.1"/>
    <property type="gene ID" value="AT2G18160"/>
</dbReference>
<dbReference type="KEGG" id="ath:AT2G18160"/>
<dbReference type="Araport" id="AT2G18160"/>
<dbReference type="TAIR" id="AT2G18160">
    <property type="gene designation" value="BZIP2"/>
</dbReference>
<dbReference type="eggNOG" id="ENOG502S0BS">
    <property type="taxonomic scope" value="Eukaryota"/>
</dbReference>
<dbReference type="HOGENOM" id="CLU_112634_1_0_1"/>
<dbReference type="InParanoid" id="Q9SI15"/>
<dbReference type="OMA" id="DDMNMMS"/>
<dbReference type="OrthoDB" id="551672at2759"/>
<dbReference type="PhylomeDB" id="Q9SI15"/>
<dbReference type="PRO" id="PR:Q9SI15"/>
<dbReference type="Proteomes" id="UP000006548">
    <property type="component" value="Chromosome 2"/>
</dbReference>
<dbReference type="ExpressionAtlas" id="Q9SI15">
    <property type="expression patterns" value="baseline and differential"/>
</dbReference>
<dbReference type="GO" id="GO:0005634">
    <property type="term" value="C:nucleus"/>
    <property type="evidence" value="ECO:0007669"/>
    <property type="project" value="UniProtKB-SubCell"/>
</dbReference>
<dbReference type="GO" id="GO:0003677">
    <property type="term" value="F:DNA binding"/>
    <property type="evidence" value="ECO:0007669"/>
    <property type="project" value="UniProtKB-KW"/>
</dbReference>
<dbReference type="GO" id="GO:0003700">
    <property type="term" value="F:DNA-binding transcription factor activity"/>
    <property type="evidence" value="ECO:0000250"/>
    <property type="project" value="TAIR"/>
</dbReference>
<dbReference type="GO" id="GO:0046982">
    <property type="term" value="F:protein heterodimerization activity"/>
    <property type="evidence" value="ECO:0000353"/>
    <property type="project" value="UniProtKB"/>
</dbReference>
<dbReference type="CDD" id="cd14702">
    <property type="entry name" value="bZIP_plant_GBF1"/>
    <property type="match status" value="1"/>
</dbReference>
<dbReference type="FunFam" id="1.20.5.170:FF:000020">
    <property type="entry name" value="BZIP transcription factor"/>
    <property type="match status" value="1"/>
</dbReference>
<dbReference type="Gene3D" id="1.20.5.170">
    <property type="match status" value="1"/>
</dbReference>
<dbReference type="InterPro" id="IPR004827">
    <property type="entry name" value="bZIP"/>
</dbReference>
<dbReference type="InterPro" id="IPR045314">
    <property type="entry name" value="bZIP_plant_GBF1"/>
</dbReference>
<dbReference type="InterPro" id="IPR046347">
    <property type="entry name" value="bZIP_sf"/>
</dbReference>
<dbReference type="PANTHER" id="PTHR45764:SF67">
    <property type="entry name" value="BZIP TRANSCRIPTION FACTOR 2"/>
    <property type="match status" value="1"/>
</dbReference>
<dbReference type="PANTHER" id="PTHR45764">
    <property type="entry name" value="BZIP TRANSCRIPTION FACTOR 44"/>
    <property type="match status" value="1"/>
</dbReference>
<dbReference type="Pfam" id="PF00170">
    <property type="entry name" value="bZIP_1"/>
    <property type="match status" value="1"/>
</dbReference>
<dbReference type="SMART" id="SM00338">
    <property type="entry name" value="BRLZ"/>
    <property type="match status" value="1"/>
</dbReference>
<dbReference type="SUPFAM" id="SSF57959">
    <property type="entry name" value="Leucine zipper domain"/>
    <property type="match status" value="1"/>
</dbReference>
<dbReference type="PROSITE" id="PS50217">
    <property type="entry name" value="BZIP"/>
    <property type="match status" value="1"/>
</dbReference>
<dbReference type="PROSITE" id="PS00036">
    <property type="entry name" value="BZIP_BASIC"/>
    <property type="match status" value="1"/>
</dbReference>
<organism>
    <name type="scientific">Arabidopsis thaliana</name>
    <name type="common">Mouse-ear cress</name>
    <dbReference type="NCBI Taxonomy" id="3702"/>
    <lineage>
        <taxon>Eukaryota</taxon>
        <taxon>Viridiplantae</taxon>
        <taxon>Streptophyta</taxon>
        <taxon>Embryophyta</taxon>
        <taxon>Tracheophyta</taxon>
        <taxon>Spermatophyta</taxon>
        <taxon>Magnoliopsida</taxon>
        <taxon>eudicotyledons</taxon>
        <taxon>Gunneridae</taxon>
        <taxon>Pentapetalae</taxon>
        <taxon>rosids</taxon>
        <taxon>malvids</taxon>
        <taxon>Brassicales</taxon>
        <taxon>Brassicaceae</taxon>
        <taxon>Camelineae</taxon>
        <taxon>Arabidopsis</taxon>
    </lineage>
</organism>
<name>BZIP2_ARATH</name>
<accession>Q9SI15</accession>
<accession>Q9FVN9</accession>
<gene>
    <name evidence="7" type="primary">BZIP2</name>
    <name evidence="8" type="synonym">FTM3</name>
    <name evidence="9" type="synonym">GBF5</name>
    <name evidence="11" type="ordered locus">At2g18160</name>
</gene>
<comment type="function">
    <text evidence="1 6">Transcription factor that binds to specific DNA sequences in target gene promoters. BZIP2-BZIP63-KIN10 complex binds to the ETFQO promoter to up-regulate its transcription (PubMed:29348240).</text>
</comment>
<comment type="subunit">
    <text evidence="4 6">Forms heterodimers with BZIP9, BZIP10, BZIP25 and BZIP63 (PubMed:16709202). Component of a ternary complex composed of BZIP2-BZIP63 heterodimer and KIN10 (PubMed:29348240).</text>
</comment>
<comment type="interaction">
    <interactant intactId="EBI-942735">
        <id>Q9SI15</id>
    </interactant>
    <interactant intactId="EBI-942648">
        <id>O22763</id>
        <label>BZIP10</label>
    </interactant>
    <organismsDiffer>false</organismsDiffer>
    <experiments>3</experiments>
</comment>
<comment type="interaction">
    <interactant intactId="EBI-942735">
        <id>Q9SI15</id>
    </interactant>
    <interactant intactId="EBI-942696">
        <id>Q9M1G6</id>
        <label>BZIP25</label>
    </interactant>
    <organismsDiffer>false</organismsDiffer>
    <experiments>6</experiments>
</comment>
<comment type="interaction">
    <interactant intactId="EBI-942735">
        <id>Q9SI15</id>
    </interactant>
    <interactant intactId="EBI-942845">
        <id>Q9LZP8</id>
        <label>BZIP53</label>
    </interactant>
    <organismsDiffer>false</organismsDiffer>
    <experiments>3</experiments>
</comment>
<comment type="interaction">
    <interactant intactId="EBI-942735">
        <id>Q9SI15</id>
    </interactant>
    <interactant intactId="EBI-942713">
        <id>B9DGI8</id>
        <label>BZIP63</label>
    </interactant>
    <organismsDiffer>false</organismsDiffer>
    <experiments>4</experiments>
</comment>
<comment type="interaction">
    <interactant intactId="EBI-942735">
        <id>Q9SI15</id>
    </interactant>
    <interactant intactId="EBI-942633">
        <id>Q9FUD3</id>
        <label>BZIP9</label>
    </interactant>
    <organismsDiffer>false</organismsDiffer>
    <experiments>3</experiments>
</comment>
<comment type="subcellular location">
    <subcellularLocation>
        <location evidence="2">Nucleus</location>
    </subcellularLocation>
</comment>
<comment type="developmental stage">
    <text evidence="5">Expressed in the shoot meristem during vegetative to reproductive phase transition.</text>
</comment>
<protein>
    <recommendedName>
        <fullName evidence="10">bZIP transcription factor 2</fullName>
        <shortName evidence="7">AtbZIP2</shortName>
    </recommendedName>
    <alternativeName>
        <fullName evidence="9">G-box-binding factor 5</fullName>
    </alternativeName>
    <alternativeName>
        <fullName evidence="8">Protein FLORAL TRANSITION AT THE MERISTEM 3</fullName>
    </alternativeName>
</protein>
<feature type="chain" id="PRO_0000436839" description="bZIP transcription factor 2">
    <location>
        <begin position="1"/>
        <end position="171"/>
    </location>
</feature>
<feature type="domain" description="bZIP" evidence="2">
    <location>
        <begin position="29"/>
        <end position="92"/>
    </location>
</feature>
<feature type="region of interest" description="Disordered" evidence="3">
    <location>
        <begin position="1"/>
        <end position="54"/>
    </location>
</feature>
<feature type="region of interest" description="Basic motif" evidence="2">
    <location>
        <begin position="31"/>
        <end position="52"/>
    </location>
</feature>
<feature type="region of interest" description="Leucine-zipper" evidence="2">
    <location>
        <begin position="57"/>
        <end position="71"/>
    </location>
</feature>
<feature type="compositionally biased region" description="Low complexity" evidence="3">
    <location>
        <begin position="1"/>
        <end position="24"/>
    </location>
</feature>
<feature type="sequence conflict" description="In Ref. 1; AAG17474." evidence="10" ref="1">
    <original>N</original>
    <variation>I</variation>
    <location>
        <position position="18"/>
    </location>
</feature>
<feature type="sequence conflict" description="In Ref. 1; AAG17474." evidence="10" ref="1">
    <original>MRKQK</original>
    <variation>VRKQE</variation>
    <location>
        <begin position="48"/>
        <end position="52"/>
    </location>
</feature>
<reference key="1">
    <citation type="submission" date="1998-03" db="EMBL/GenBank/DDBJ databases">
        <title>GBF5 and GBF6: two bZIP proteins from Arabidopsis that belong to a new subfamily of the GBF transcription factors.</title>
        <authorList>
            <person name="Jarillo J.A."/>
            <person name="Cashmore A.R."/>
        </authorList>
    </citation>
    <scope>NUCLEOTIDE SEQUENCE [MRNA]</scope>
    <source>
        <strain>cv. Columbia</strain>
    </source>
</reference>
<reference key="2">
    <citation type="journal article" date="1999" name="Nature">
        <title>Sequence and analysis of chromosome 2 of the plant Arabidopsis thaliana.</title>
        <authorList>
            <person name="Lin X."/>
            <person name="Kaul S."/>
            <person name="Rounsley S.D."/>
            <person name="Shea T.P."/>
            <person name="Benito M.-I."/>
            <person name="Town C.D."/>
            <person name="Fujii C.Y."/>
            <person name="Mason T.M."/>
            <person name="Bowman C.L."/>
            <person name="Barnstead M.E."/>
            <person name="Feldblyum T.V."/>
            <person name="Buell C.R."/>
            <person name="Ketchum K.A."/>
            <person name="Lee J.J."/>
            <person name="Ronning C.M."/>
            <person name="Koo H.L."/>
            <person name="Moffat K.S."/>
            <person name="Cronin L.A."/>
            <person name="Shen M."/>
            <person name="Pai G."/>
            <person name="Van Aken S."/>
            <person name="Umayam L."/>
            <person name="Tallon L.J."/>
            <person name="Gill J.E."/>
            <person name="Adams M.D."/>
            <person name="Carrera A.J."/>
            <person name="Creasy T.H."/>
            <person name="Goodman H.M."/>
            <person name="Somerville C.R."/>
            <person name="Copenhaver G.P."/>
            <person name="Preuss D."/>
            <person name="Nierman W.C."/>
            <person name="White O."/>
            <person name="Eisen J.A."/>
            <person name="Salzberg S.L."/>
            <person name="Fraser C.M."/>
            <person name="Venter J.C."/>
        </authorList>
    </citation>
    <scope>NUCLEOTIDE SEQUENCE [LARGE SCALE GENOMIC DNA]</scope>
    <source>
        <strain>cv. Columbia</strain>
    </source>
</reference>
<reference key="3">
    <citation type="journal article" date="2017" name="Plant J.">
        <title>Araport11: a complete reannotation of the Arabidopsis thaliana reference genome.</title>
        <authorList>
            <person name="Cheng C.Y."/>
            <person name="Krishnakumar V."/>
            <person name="Chan A.P."/>
            <person name="Thibaud-Nissen F."/>
            <person name="Schobel S."/>
            <person name="Town C.D."/>
        </authorList>
    </citation>
    <scope>GENOME REANNOTATION</scope>
    <source>
        <strain>cv. Columbia</strain>
    </source>
</reference>
<reference key="4">
    <citation type="journal article" date="2003" name="Science">
        <title>Empirical analysis of transcriptional activity in the Arabidopsis genome.</title>
        <authorList>
            <person name="Yamada K."/>
            <person name="Lim J."/>
            <person name="Dale J.M."/>
            <person name="Chen H."/>
            <person name="Shinn P."/>
            <person name="Palm C.J."/>
            <person name="Southwick A.M."/>
            <person name="Wu H.C."/>
            <person name="Kim C.J."/>
            <person name="Nguyen M."/>
            <person name="Pham P.K."/>
            <person name="Cheuk R.F."/>
            <person name="Karlin-Newmann G."/>
            <person name="Liu S.X."/>
            <person name="Lam B."/>
            <person name="Sakano H."/>
            <person name="Wu T."/>
            <person name="Yu G."/>
            <person name="Miranda M."/>
            <person name="Quach H.L."/>
            <person name="Tripp M."/>
            <person name="Chang C.H."/>
            <person name="Lee J.M."/>
            <person name="Toriumi M.J."/>
            <person name="Chan M.M."/>
            <person name="Tang C.C."/>
            <person name="Onodera C.S."/>
            <person name="Deng J.M."/>
            <person name="Akiyama K."/>
            <person name="Ansari Y."/>
            <person name="Arakawa T."/>
            <person name="Banh J."/>
            <person name="Banno F."/>
            <person name="Bowser L."/>
            <person name="Brooks S.Y."/>
            <person name="Carninci P."/>
            <person name="Chao Q."/>
            <person name="Choy N."/>
            <person name="Enju A."/>
            <person name="Goldsmith A.D."/>
            <person name="Gurjal M."/>
            <person name="Hansen N.F."/>
            <person name="Hayashizaki Y."/>
            <person name="Johnson-Hopson C."/>
            <person name="Hsuan V.W."/>
            <person name="Iida K."/>
            <person name="Karnes M."/>
            <person name="Khan S."/>
            <person name="Koesema E."/>
            <person name="Ishida J."/>
            <person name="Jiang P.X."/>
            <person name="Jones T."/>
            <person name="Kawai J."/>
            <person name="Kamiya A."/>
            <person name="Meyers C."/>
            <person name="Nakajima M."/>
            <person name="Narusaka M."/>
            <person name="Seki M."/>
            <person name="Sakurai T."/>
            <person name="Satou M."/>
            <person name="Tamse R."/>
            <person name="Vaysberg M."/>
            <person name="Wallender E.K."/>
            <person name="Wong C."/>
            <person name="Yamamura Y."/>
            <person name="Yuan S."/>
            <person name="Shinozaki K."/>
            <person name="Davis R.W."/>
            <person name="Theologis A."/>
            <person name="Ecker J.R."/>
        </authorList>
    </citation>
    <scope>NUCLEOTIDE SEQUENCE [LARGE SCALE MRNA]</scope>
    <source>
        <strain>cv. Columbia</strain>
    </source>
</reference>
<reference key="5">
    <citation type="journal article" date="2002" name="Trends Plant Sci.">
        <title>bZIP transcription factors in Arabidopsis.</title>
        <authorList>
            <person name="Jakoby M."/>
            <person name="Weisshaar B."/>
            <person name="Droege-Laser W."/>
            <person name="Vicente-Carbajosa J."/>
            <person name="Tiedemann J."/>
            <person name="Kroj T."/>
            <person name="Parcy F."/>
        </authorList>
    </citation>
    <scope>GENE FAMILY</scope>
    <scope>NOMENCLATURE</scope>
</reference>
<reference key="6">
    <citation type="journal article" date="2006" name="Plant J.">
        <title>Two-hybrid protein-protein interaction analysis in Arabidopsis protoplasts: establishment of a heterodimerization map of group C and group S bZIP transcription factors.</title>
        <authorList>
            <person name="Ehlert A."/>
            <person name="Weltmeier F."/>
            <person name="Wang X."/>
            <person name="Mayer C.S."/>
            <person name="Smeekens S."/>
            <person name="Vicente-Carbajosa J."/>
            <person name="Droege-Laser W."/>
        </authorList>
    </citation>
    <scope>INTERACTION WITH BZIP9; BZIP10; BZIP25 AND BZIP63</scope>
</reference>
<reference key="7">
    <citation type="journal article" date="2012" name="Plant Cell">
        <title>Analysis of the Arabidopsis shoot meristem transcriptome during floral transition identifies distinct regulatory patterns and a leucine-rich repeat protein that promotes flowering.</title>
        <authorList>
            <person name="Torti S."/>
            <person name="Fornara F."/>
            <person name="Vincent C."/>
            <person name="Andres F."/>
            <person name="Nordstrom K."/>
            <person name="Gobel U."/>
            <person name="Knoll D."/>
            <person name="Schoof H."/>
            <person name="Coupland G."/>
        </authorList>
    </citation>
    <scope>DEVELOPMENTAL STAGE</scope>
</reference>
<reference key="8">
    <citation type="journal article" date="2018" name="Plant Cell">
        <title>Snf1-RELATED KINASE1-controlled C/S1-bZIP signaling activates alternative mitochondrial metabolic pathways to ensure plant survival in extended darkness.</title>
        <authorList>
            <person name="Pedrotti L."/>
            <person name="Weiste C."/>
            <person name="Naegele T."/>
            <person name="Wolf E."/>
            <person name="Lorenzin F."/>
            <person name="Dietrich K."/>
            <person name="Mair A."/>
            <person name="Weckwerth W."/>
            <person name="Teige M."/>
            <person name="Baena-Gonzalez E."/>
            <person name="Droege-Laser W."/>
        </authorList>
    </citation>
    <scope>INTERACTION WITH KIN10 AND BZIP63</scope>
    <scope>FUNCTION</scope>
</reference>
<sequence>MASSSSTYRSSSSSDGGNNNPSDSVVTVDERKRKRMLSNRESARRSRMRKQKHVDDLTAQINQLSNDNRQILNSLTVTSQLYMKIQAENSVLTAQMEELSTRLQSLNEIVDLVQSNGAGFGVDQIDGCGFDDRTVGIDGYYDDMNMMSNVNHWGGSVYTNQPIMANDINMY</sequence>
<keyword id="KW-0238">DNA-binding</keyword>
<keyword id="KW-0539">Nucleus</keyword>
<keyword id="KW-1185">Reference proteome</keyword>
<keyword id="KW-0804">Transcription</keyword>
<keyword id="KW-0805">Transcription regulation</keyword>
<evidence type="ECO:0000250" key="1">
    <source>
        <dbReference type="UniProtKB" id="O65683"/>
    </source>
</evidence>
<evidence type="ECO:0000255" key="2">
    <source>
        <dbReference type="PROSITE-ProRule" id="PRU00978"/>
    </source>
</evidence>
<evidence type="ECO:0000256" key="3">
    <source>
        <dbReference type="SAM" id="MobiDB-lite"/>
    </source>
</evidence>
<evidence type="ECO:0000269" key="4">
    <source>
    </source>
</evidence>
<evidence type="ECO:0000269" key="5">
    <source>
    </source>
</evidence>
<evidence type="ECO:0000269" key="6">
    <source>
    </source>
</evidence>
<evidence type="ECO:0000303" key="7">
    <source>
    </source>
</evidence>
<evidence type="ECO:0000303" key="8">
    <source>
    </source>
</evidence>
<evidence type="ECO:0000303" key="9">
    <source ref="1"/>
</evidence>
<evidence type="ECO:0000305" key="10"/>
<evidence type="ECO:0000312" key="11">
    <source>
        <dbReference type="Araport" id="AT2G18160"/>
    </source>
</evidence>
<proteinExistence type="evidence at protein level"/>